<accession>P11498</accession>
<accession>B4DN00</accession>
<accession>Q16705</accession>
<gene>
    <name evidence="18" type="primary">PC</name>
</gene>
<name>PYC_HUMAN</name>
<proteinExistence type="evidence at protein level"/>
<reference key="1">
    <citation type="journal article" date="1994" name="Biochim. Biophys. Acta">
        <title>Primary amino acid sequence and structure of human pyruvate carboxylase.</title>
        <authorList>
            <person name="Wexler I.D."/>
            <person name="Du Y."/>
            <person name="Lisgaris M.V."/>
            <person name="Mandal S.K."/>
            <person name="Freytag S.O."/>
            <person name="Yang B.-S."/>
            <person name="Liu T.-C."/>
            <person name="Kwon M."/>
            <person name="Patel M.S."/>
            <person name="Kerr D.S."/>
        </authorList>
    </citation>
    <scope>NUCLEOTIDE SEQUENCE [MRNA] (ISOFORM 1)</scope>
    <scope>BIOTINYLATION AT LYS-1144</scope>
    <source>
        <tissue>Kidney</tissue>
        <tissue>Liver</tissue>
    </source>
</reference>
<reference key="2">
    <citation type="journal article" date="1994" name="Biochem. Biophys. Res. Commun.">
        <title>cDNA cloning of human kidney pyruvate carboxylase.</title>
        <authorList>
            <person name="Mackay N."/>
            <person name="Rigat B."/>
            <person name="Douglas C."/>
            <person name="Chen H.S."/>
            <person name="Robinson B.H."/>
        </authorList>
    </citation>
    <scope>NUCLEOTIDE SEQUENCE [MRNA] (ISOFORM 1)</scope>
    <source>
        <tissue>Kidney</tissue>
    </source>
</reference>
<reference key="3">
    <citation type="submission" date="1995-07" db="EMBL/GenBank/DDBJ databases">
        <authorList>
            <person name="Walker M.E."/>
            <person name="Jitrapakdee S."/>
            <person name="Val D.L."/>
            <person name="Wallace J.C."/>
        </authorList>
    </citation>
    <scope>NUCLEOTIDE SEQUENCE [MRNA] (ISOFORM 1)</scope>
    <source>
        <tissue>Kidney</tissue>
        <tissue>Liver</tissue>
    </source>
</reference>
<reference key="4">
    <citation type="journal article" date="2004" name="Nat. Genet.">
        <title>Complete sequencing and characterization of 21,243 full-length human cDNAs.</title>
        <authorList>
            <person name="Ota T."/>
            <person name="Suzuki Y."/>
            <person name="Nishikawa T."/>
            <person name="Otsuki T."/>
            <person name="Sugiyama T."/>
            <person name="Irie R."/>
            <person name="Wakamatsu A."/>
            <person name="Hayashi K."/>
            <person name="Sato H."/>
            <person name="Nagai K."/>
            <person name="Kimura K."/>
            <person name="Makita H."/>
            <person name="Sekine M."/>
            <person name="Obayashi M."/>
            <person name="Nishi T."/>
            <person name="Shibahara T."/>
            <person name="Tanaka T."/>
            <person name="Ishii S."/>
            <person name="Yamamoto J."/>
            <person name="Saito K."/>
            <person name="Kawai Y."/>
            <person name="Isono Y."/>
            <person name="Nakamura Y."/>
            <person name="Nagahari K."/>
            <person name="Murakami K."/>
            <person name="Yasuda T."/>
            <person name="Iwayanagi T."/>
            <person name="Wagatsuma M."/>
            <person name="Shiratori A."/>
            <person name="Sudo H."/>
            <person name="Hosoiri T."/>
            <person name="Kaku Y."/>
            <person name="Kodaira H."/>
            <person name="Kondo H."/>
            <person name="Sugawara M."/>
            <person name="Takahashi M."/>
            <person name="Kanda K."/>
            <person name="Yokoi T."/>
            <person name="Furuya T."/>
            <person name="Kikkawa E."/>
            <person name="Omura Y."/>
            <person name="Abe K."/>
            <person name="Kamihara K."/>
            <person name="Katsuta N."/>
            <person name="Sato K."/>
            <person name="Tanikawa M."/>
            <person name="Yamazaki M."/>
            <person name="Ninomiya K."/>
            <person name="Ishibashi T."/>
            <person name="Yamashita H."/>
            <person name="Murakawa K."/>
            <person name="Fujimori K."/>
            <person name="Tanai H."/>
            <person name="Kimata M."/>
            <person name="Watanabe M."/>
            <person name="Hiraoka S."/>
            <person name="Chiba Y."/>
            <person name="Ishida S."/>
            <person name="Ono Y."/>
            <person name="Takiguchi S."/>
            <person name="Watanabe S."/>
            <person name="Yosida M."/>
            <person name="Hotuta T."/>
            <person name="Kusano J."/>
            <person name="Kanehori K."/>
            <person name="Takahashi-Fujii A."/>
            <person name="Hara H."/>
            <person name="Tanase T.-O."/>
            <person name="Nomura Y."/>
            <person name="Togiya S."/>
            <person name="Komai F."/>
            <person name="Hara R."/>
            <person name="Takeuchi K."/>
            <person name="Arita M."/>
            <person name="Imose N."/>
            <person name="Musashino K."/>
            <person name="Yuuki H."/>
            <person name="Oshima A."/>
            <person name="Sasaki N."/>
            <person name="Aotsuka S."/>
            <person name="Yoshikawa Y."/>
            <person name="Matsunawa H."/>
            <person name="Ichihara T."/>
            <person name="Shiohata N."/>
            <person name="Sano S."/>
            <person name="Moriya S."/>
            <person name="Momiyama H."/>
            <person name="Satoh N."/>
            <person name="Takami S."/>
            <person name="Terashima Y."/>
            <person name="Suzuki O."/>
            <person name="Nakagawa S."/>
            <person name="Senoh A."/>
            <person name="Mizoguchi H."/>
            <person name="Goto Y."/>
            <person name="Shimizu F."/>
            <person name="Wakebe H."/>
            <person name="Hishigaki H."/>
            <person name="Watanabe T."/>
            <person name="Sugiyama A."/>
            <person name="Takemoto M."/>
            <person name="Kawakami B."/>
            <person name="Yamazaki M."/>
            <person name="Watanabe K."/>
            <person name="Kumagai A."/>
            <person name="Itakura S."/>
            <person name="Fukuzumi Y."/>
            <person name="Fujimori Y."/>
            <person name="Komiyama M."/>
            <person name="Tashiro H."/>
            <person name="Tanigami A."/>
            <person name="Fujiwara T."/>
            <person name="Ono T."/>
            <person name="Yamada K."/>
            <person name="Fujii Y."/>
            <person name="Ozaki K."/>
            <person name="Hirao M."/>
            <person name="Ohmori Y."/>
            <person name="Kawabata A."/>
            <person name="Hikiji T."/>
            <person name="Kobatake N."/>
            <person name="Inagaki H."/>
            <person name="Ikema Y."/>
            <person name="Okamoto S."/>
            <person name="Okitani R."/>
            <person name="Kawakami T."/>
            <person name="Noguchi S."/>
            <person name="Itoh T."/>
            <person name="Shigeta K."/>
            <person name="Senba T."/>
            <person name="Matsumura K."/>
            <person name="Nakajima Y."/>
            <person name="Mizuno T."/>
            <person name="Morinaga M."/>
            <person name="Sasaki M."/>
            <person name="Togashi T."/>
            <person name="Oyama M."/>
            <person name="Hata H."/>
            <person name="Watanabe M."/>
            <person name="Komatsu T."/>
            <person name="Mizushima-Sugano J."/>
            <person name="Satoh T."/>
            <person name="Shirai Y."/>
            <person name="Takahashi Y."/>
            <person name="Nakagawa K."/>
            <person name="Okumura K."/>
            <person name="Nagase T."/>
            <person name="Nomura N."/>
            <person name="Kikuchi H."/>
            <person name="Masuho Y."/>
            <person name="Yamashita R."/>
            <person name="Nakai K."/>
            <person name="Yada T."/>
            <person name="Nakamura Y."/>
            <person name="Ohara O."/>
            <person name="Isogai T."/>
            <person name="Sugano S."/>
        </authorList>
    </citation>
    <scope>NUCLEOTIDE SEQUENCE [LARGE SCALE MRNA] (ISOFORM 2)</scope>
    <source>
        <tissue>Lung</tissue>
    </source>
</reference>
<reference key="5">
    <citation type="journal article" date="2006" name="Nature">
        <title>Human chromosome 11 DNA sequence and analysis including novel gene identification.</title>
        <authorList>
            <person name="Taylor T.D."/>
            <person name="Noguchi H."/>
            <person name="Totoki Y."/>
            <person name="Toyoda A."/>
            <person name="Kuroki Y."/>
            <person name="Dewar K."/>
            <person name="Lloyd C."/>
            <person name="Itoh T."/>
            <person name="Takeda T."/>
            <person name="Kim D.-W."/>
            <person name="She X."/>
            <person name="Barlow K.F."/>
            <person name="Bloom T."/>
            <person name="Bruford E."/>
            <person name="Chang J.L."/>
            <person name="Cuomo C.A."/>
            <person name="Eichler E."/>
            <person name="FitzGerald M.G."/>
            <person name="Jaffe D.B."/>
            <person name="LaButti K."/>
            <person name="Nicol R."/>
            <person name="Park H.-S."/>
            <person name="Seaman C."/>
            <person name="Sougnez C."/>
            <person name="Yang X."/>
            <person name="Zimmer A.R."/>
            <person name="Zody M.C."/>
            <person name="Birren B.W."/>
            <person name="Nusbaum C."/>
            <person name="Fujiyama A."/>
            <person name="Hattori M."/>
            <person name="Rogers J."/>
            <person name="Lander E.S."/>
            <person name="Sakaki Y."/>
        </authorList>
    </citation>
    <scope>NUCLEOTIDE SEQUENCE [LARGE SCALE GENOMIC DNA]</scope>
</reference>
<reference key="6">
    <citation type="journal article" date="2004" name="Genome Res.">
        <title>The status, quality, and expansion of the NIH full-length cDNA project: the Mammalian Gene Collection (MGC).</title>
        <authorList>
            <consortium name="The MGC Project Team"/>
        </authorList>
    </citation>
    <scope>NUCLEOTIDE SEQUENCE [LARGE SCALE MRNA] (ISOFORM 1)</scope>
    <source>
        <tissue>Lung</tissue>
    </source>
</reference>
<reference key="7">
    <citation type="journal article" date="1987" name="Arch. Biochem. Biophys.">
        <title>Sequence homology around the biotin-binding site of human propionyl-CoA carboxylase and pyruvate carboxylase.</title>
        <authorList>
            <person name="Lamhonwah A.-M."/>
            <person name="Quan F."/>
            <person name="Gravel R.A."/>
        </authorList>
    </citation>
    <scope>NUCLEOTIDE SEQUENCE [MRNA] OF 1083-1178 (ISOFORM 1)</scope>
</reference>
<reference key="8">
    <citation type="journal article" date="1984" name="J. Biol. Chem.">
        <title>Molecular cloning of a cDNA for human pyruvate carboxylase. Structural relationship to other biotin-containing carboxylases and regulation of mRNA content in differentiating preadipocytes.</title>
        <authorList>
            <person name="Freytag S.O."/>
            <person name="Collier K.J."/>
        </authorList>
    </citation>
    <scope>NUCLEOTIDE SEQUENCE [MRNA] OF 1135-1178 (ISOFORM 1)</scope>
    <scope>BIOTINYLATION AT LYS-1144</scope>
</reference>
<reference key="9">
    <citation type="journal article" date="2009" name="Science">
        <title>Lysine acetylation targets protein complexes and co-regulates major cellular functions.</title>
        <authorList>
            <person name="Choudhary C."/>
            <person name="Kumar C."/>
            <person name="Gnad F."/>
            <person name="Nielsen M.L."/>
            <person name="Rehman M."/>
            <person name="Walther T.C."/>
            <person name="Olsen J.V."/>
            <person name="Mann M."/>
        </authorList>
    </citation>
    <scope>ACETYLATION [LARGE SCALE ANALYSIS] AT LYS-1090</scope>
    <scope>IDENTIFICATION BY MASS SPECTROMETRY [LARGE SCALE ANALYSIS]</scope>
</reference>
<reference key="10">
    <citation type="journal article" date="2011" name="BMC Syst. Biol.">
        <title>Initial characterization of the human central proteome.</title>
        <authorList>
            <person name="Burkard T.R."/>
            <person name="Planyavsky M."/>
            <person name="Kaupe I."/>
            <person name="Breitwieser F.P."/>
            <person name="Buerckstuemmer T."/>
            <person name="Bennett K.L."/>
            <person name="Superti-Furga G."/>
            <person name="Colinge J."/>
        </authorList>
    </citation>
    <scope>IDENTIFICATION BY MASS SPECTROMETRY [LARGE SCALE ANALYSIS]</scope>
</reference>
<reference key="11">
    <citation type="journal article" date="2013" name="Mitochondrion">
        <title>Mitochondrial SIRT4-type proteins in Caenorhabditis elegans and mammals interact with pyruvate carboxylase and other acetylated biotin-dependent carboxylases.</title>
        <authorList>
            <person name="Wirth M."/>
            <person name="Karaca S."/>
            <person name="Wenzel D."/>
            <person name="Ho L."/>
            <person name="Tishkoff D."/>
            <person name="Lombard D.B."/>
            <person name="Verdin E."/>
            <person name="Urlaub H."/>
            <person name="Jedrusik-Bode M."/>
            <person name="Fischle W."/>
        </authorList>
    </citation>
    <scope>INTERACTION WITH SIRT4</scope>
</reference>
<reference key="12">
    <citation type="journal article" date="2014" name="J. Proteomics">
        <title>An enzyme assisted RP-RPLC approach for in-depth analysis of human liver phosphoproteome.</title>
        <authorList>
            <person name="Bian Y."/>
            <person name="Song C."/>
            <person name="Cheng K."/>
            <person name="Dong M."/>
            <person name="Wang F."/>
            <person name="Huang J."/>
            <person name="Sun D."/>
            <person name="Wang L."/>
            <person name="Ye M."/>
            <person name="Zou H."/>
        </authorList>
    </citation>
    <scope>IDENTIFICATION BY MASS SPECTROMETRY [LARGE SCALE ANALYSIS]</scope>
    <source>
        <tissue>Liver</tissue>
    </source>
</reference>
<reference key="13">
    <citation type="journal article" date="2015" name="Proteomics">
        <title>N-terminome analysis of the human mitochondrial proteome.</title>
        <authorList>
            <person name="Vaca Jacome A.S."/>
            <person name="Rabilloud T."/>
            <person name="Schaeffer-Reiss C."/>
            <person name="Rompais M."/>
            <person name="Ayoub D."/>
            <person name="Lane L."/>
            <person name="Bairoch A."/>
            <person name="Van Dorsselaer A."/>
            <person name="Carapito C."/>
        </authorList>
    </citation>
    <scope>IDENTIFICATION BY MASS SPECTROMETRY [LARGE SCALE ANALYSIS]</scope>
</reference>
<reference key="14">
    <citation type="journal article" date="2008" name="Nat. Struct. Mol. Biol.">
        <title>Crystal structures of human and Staphylococcus aureus pyruvate carboxylase and molecular insights into the carboxyltransfer reaction.</title>
        <authorList>
            <person name="Xiang S."/>
            <person name="Tong L."/>
        </authorList>
    </citation>
    <scope>X-RAY CRYSTALLOGRAPHY (2.8 ANGSTROMS) OF 481-1178 IN COMPLEX WITH PYRUVATE; MANGANESE AND BIOTIN ANALOG</scope>
    <scope>CARBOXYLATION AT LYS-741</scope>
    <scope>MUTAGENESIS OF PHE-1077</scope>
    <scope>SUBUNIT</scope>
</reference>
<reference key="15">
    <citation type="journal article" date="1998" name="Am. J. Hum. Genet.">
        <title>Amerindian pyruvate carboxylase deficiency is associated with two distinct missense mutations.</title>
        <authorList>
            <person name="Carbone M.A."/>
            <person name="MacKay N."/>
            <person name="Ling M."/>
            <person name="Cole D.E.C."/>
            <person name="Douglas C."/>
            <person name="Rigat B."/>
            <person name="Feigenbaum A."/>
            <person name="Clarke J.T.R."/>
            <person name="Haworth J.C."/>
            <person name="Greenberg C.R."/>
            <person name="Seargeant L."/>
            <person name="Robinson B.H."/>
        </authorList>
    </citation>
    <scope>VARIANTS PC DEFICIENCY THR-610 AND ILE-743</scope>
</reference>
<reference key="16">
    <citation type="journal article" date="1998" name="Pediatr. Res.">
        <title>Molecular characterization of pyruvate carboxylase deficiency in two consanguineous families.</title>
        <authorList>
            <person name="Wexler I.D."/>
            <person name="Kerr D.S."/>
            <person name="Du Y."/>
            <person name="Kaung M.M."/>
            <person name="Stephenson W."/>
            <person name="Lusk M.M."/>
            <person name="Wappner R.S."/>
            <person name="Higgins J.J."/>
        </authorList>
    </citation>
    <scope>VARIANTS PC DEFICIENCY ALA-145 AND CYS-451</scope>
    <scope>FUNCTION</scope>
    <scope>CATALYTIC ACTIVITY</scope>
    <scope>SUBCELLULAR LOCATION</scope>
    <scope>CHARACTERIZATION OF VARIANTS PC DEFICIENCY ALA-145 AND CYS-451</scope>
    <scope>COFACTOR</scope>
</reference>
<reference key="17">
    <citation type="journal article" date="2009" name="Hum. Mutat.">
        <title>Structural insights on pathogenic effects of novel mutations causing pyruvate carboxylase deficiency.</title>
        <authorList>
            <person name="Monnot S."/>
            <person name="Serre V."/>
            <person name="Chadefaux-Vekemans B."/>
            <person name="Aupetit J."/>
            <person name="Romano S."/>
            <person name="De Lonlay P."/>
            <person name="Rival J.-M."/>
            <person name="Munnich A."/>
            <person name="Steffann J."/>
            <person name="Bonnefont J.-P."/>
        </authorList>
    </citation>
    <scope>VARIANTS PC DEFICIENCY ALA-145; GLN-156; TRP-270; CYS-304; CYS-451; LEU-583; THR-610; GLN-631; ILE-743 AND 1131-VAL--LYS-1133 DEL</scope>
</reference>
<evidence type="ECO:0000250" key="1"/>
<evidence type="ECO:0000250" key="2">
    <source>
        <dbReference type="UniProtKB" id="P52873"/>
    </source>
</evidence>
<evidence type="ECO:0000250" key="3">
    <source>
        <dbReference type="UniProtKB" id="Q05920"/>
    </source>
</evidence>
<evidence type="ECO:0000255" key="4"/>
<evidence type="ECO:0000255" key="5">
    <source>
        <dbReference type="PROSITE-ProRule" id="PRU00409"/>
    </source>
</evidence>
<evidence type="ECO:0000255" key="6">
    <source>
        <dbReference type="PROSITE-ProRule" id="PRU01066"/>
    </source>
</evidence>
<evidence type="ECO:0000255" key="7">
    <source>
        <dbReference type="PROSITE-ProRule" id="PRU01151"/>
    </source>
</evidence>
<evidence type="ECO:0000269" key="8">
    <source>
    </source>
</evidence>
<evidence type="ECO:0000269" key="9">
    <source>
    </source>
</evidence>
<evidence type="ECO:0000269" key="10">
    <source>
    </source>
</evidence>
<evidence type="ECO:0000269" key="11">
    <source>
    </source>
</evidence>
<evidence type="ECO:0000269" key="12">
    <source>
    </source>
</evidence>
<evidence type="ECO:0000269" key="13">
    <source>
    </source>
</evidence>
<evidence type="ECO:0000269" key="14">
    <source>
    </source>
</evidence>
<evidence type="ECO:0000303" key="15">
    <source>
    </source>
</evidence>
<evidence type="ECO:0000305" key="16"/>
<evidence type="ECO:0000305" key="17">
    <source>
    </source>
</evidence>
<evidence type="ECO:0000312" key="18">
    <source>
        <dbReference type="HGNC" id="HGNC:8636"/>
    </source>
</evidence>
<evidence type="ECO:0007744" key="19">
    <source>
    </source>
</evidence>
<evidence type="ECO:0007829" key="20">
    <source>
        <dbReference type="PDB" id="3BG3"/>
    </source>
</evidence>
<evidence type="ECO:0007829" key="21">
    <source>
        <dbReference type="PDB" id="3BG9"/>
    </source>
</evidence>
<evidence type="ECO:0007829" key="22">
    <source>
        <dbReference type="PDB" id="7WTE"/>
    </source>
</evidence>
<evidence type="ECO:0007829" key="23">
    <source>
        <dbReference type="PDB" id="8XL9"/>
    </source>
</evidence>
<sequence length="1178" mass="129634">MLKFRTVHGGLRLLGIRRTSTAPAASPNVRRLEYKPIKKVMVANRGEIAIRVFRACTELGIRTVAIYSEQDTGQMHRQKADEAYLIGRGLAPVQAYLHIPDIIKVAKENNVDAVHPGYGFLSERADFAQACQDAGVRFIGPSPEVVRKMGDKVEARAIAIAAGVPVVPGTDAPITSLHEAHEFSNTYGFPIIFKAAYGGGGRGMRVVHSYEELEENYTRAYSEALAAFGNGALFVEKFIEKPRHIEVQILGDQYGNILHLYERDCSIQRRHQKVVEIAPAAHLDPQLRTRLTSDSVKLAKQVGYENAGTVEFLVDRHGKHYFIEVNSRLQVEHTVTEEITDVDLVHAQIHVAEGRSLPDLGLRQENIRINGCAIQCRVTTEDPARSFQPDTGRIEVFRSGEGMGIRLDNASAFQGAVISPHYDSLLVKVIAHGKDHPTAATKMSRALAEFRVRGVKTNIAFLQNVLNNQQFLAGTVDTQFIDENPELFQLRPAQNRAQKLLHYLGHVMVNGPTTPIPVKASPSPTDPVVPAVPIGPPPAGFRDILLREGPEGFARAVRNHPGLLLMDTTFRDAHQSLLATRVRTHDLKKIAPYVAHNFSKLFSMENWGGATFDVAMRFLYECPWRRLQELRELIPNIPFQMLLRGANAVGYTNYPDNVVFKFCEVAKENGMDVFRVFDSLNYLPNMLLGMEAAGSAGGVVEAAISYTGDVADPSRTKYSLQYYMGLAEELVRAGTHILCIKDMAGLLKPTACTMLVSSLRDRFPDLPLHIHTHDTSGAGVAAMLACAQAGADVVDVAADSMSGMTSQPSMGALVACTRGTPLDTEVPMERVFDYSEYWEGARGLYAAFDCTATMKSGNSDVYENEIPGGQYTNLHFQAHSMGLGSKFKEVKKAYVEANQMLGDLIKVTPSSKIVGDLAQFMVQNGLSRAEAEAQAEELSFPRSVVEFLQGYIGVPHGGFPEPFRSKVLKDLPRVEGRPGASLPPLDLQALEKELVDRHGEEVTPEDVLSAAMYPDVFAHFKDFTATFGPLDSLNTRLFLQGPKIAEEFEVELERGKTLHIKALAVSDLNRAGQRQVFFELNGQLRSILVKDTQAMKEMHFHPKALKDVKGQIGAPMPGKVIDIKVVAGAKVAKGQPLCVLSAMKMETVVTSPMEGTVRKVHVTKDMTLEGDDLILEIE</sequence>
<organism>
    <name type="scientific">Homo sapiens</name>
    <name type="common">Human</name>
    <dbReference type="NCBI Taxonomy" id="9606"/>
    <lineage>
        <taxon>Eukaryota</taxon>
        <taxon>Metazoa</taxon>
        <taxon>Chordata</taxon>
        <taxon>Craniata</taxon>
        <taxon>Vertebrata</taxon>
        <taxon>Euteleostomi</taxon>
        <taxon>Mammalia</taxon>
        <taxon>Eutheria</taxon>
        <taxon>Euarchontoglires</taxon>
        <taxon>Primates</taxon>
        <taxon>Haplorrhini</taxon>
        <taxon>Catarrhini</taxon>
        <taxon>Hominidae</taxon>
        <taxon>Homo</taxon>
    </lineage>
</organism>
<protein>
    <recommendedName>
        <fullName evidence="16">Pyruvate carboxylase, mitochondrial</fullName>
        <ecNumber evidence="13">6.4.1.1</ecNumber>
    </recommendedName>
    <alternativeName>
        <fullName>Pyruvic carboxylase</fullName>
        <shortName>PCB</shortName>
    </alternativeName>
</protein>
<dbReference type="EC" id="6.4.1.1" evidence="13"/>
<dbReference type="EMBL" id="U04641">
    <property type="protein sequence ID" value="AAA99537.1"/>
    <property type="molecule type" value="mRNA"/>
</dbReference>
<dbReference type="EMBL" id="S72370">
    <property type="protein sequence ID" value="AAB31500.1"/>
    <property type="molecule type" value="mRNA"/>
</dbReference>
<dbReference type="EMBL" id="U30891">
    <property type="protein sequence ID" value="AAA82937.1"/>
    <property type="molecule type" value="mRNA"/>
</dbReference>
<dbReference type="EMBL" id="AK297705">
    <property type="protein sequence ID" value="BAG60062.1"/>
    <property type="molecule type" value="mRNA"/>
</dbReference>
<dbReference type="EMBL" id="AP000485">
    <property type="status" value="NOT_ANNOTATED_CDS"/>
    <property type="molecule type" value="Genomic_DNA"/>
</dbReference>
<dbReference type="EMBL" id="AP003176">
    <property type="status" value="NOT_ANNOTATED_CDS"/>
    <property type="molecule type" value="Genomic_DNA"/>
</dbReference>
<dbReference type="EMBL" id="BC011617">
    <property type="protein sequence ID" value="AAH11617.1"/>
    <property type="molecule type" value="mRNA"/>
</dbReference>
<dbReference type="EMBL" id="M26122">
    <property type="protein sequence ID" value="AAA36423.1"/>
    <property type="molecule type" value="mRNA"/>
</dbReference>
<dbReference type="EMBL" id="K02282">
    <property type="protein sequence ID" value="AAA60033.1"/>
    <property type="molecule type" value="mRNA"/>
</dbReference>
<dbReference type="CCDS" id="CCDS8152.1">
    <molecule id="P11498-1"/>
</dbReference>
<dbReference type="PIR" id="G01933">
    <property type="entry name" value="JC2460"/>
</dbReference>
<dbReference type="RefSeq" id="NP_000911.2">
    <molecule id="P11498-1"/>
    <property type="nucleotide sequence ID" value="NM_000920.4"/>
</dbReference>
<dbReference type="RefSeq" id="NP_001035806.1">
    <molecule id="P11498-1"/>
    <property type="nucleotide sequence ID" value="NM_001040716.2"/>
</dbReference>
<dbReference type="RefSeq" id="NP_071504.2">
    <molecule id="P11498-1"/>
    <property type="nucleotide sequence ID" value="NM_022172.3"/>
</dbReference>
<dbReference type="RefSeq" id="XP_005274088.1">
    <molecule id="P11498-1"/>
    <property type="nucleotide sequence ID" value="XM_005274031.5"/>
</dbReference>
<dbReference type="RefSeq" id="XP_005274089.1">
    <molecule id="P11498-1"/>
    <property type="nucleotide sequence ID" value="XM_005274032.5"/>
</dbReference>
<dbReference type="RefSeq" id="XP_006718641.1">
    <molecule id="P11498-1"/>
    <property type="nucleotide sequence ID" value="XM_006718578.4"/>
</dbReference>
<dbReference type="RefSeq" id="XP_011543388.1">
    <molecule id="P11498-1"/>
    <property type="nucleotide sequence ID" value="XM_011545086.3"/>
</dbReference>
<dbReference type="RefSeq" id="XP_016873357.1">
    <molecule id="P11498-1"/>
    <property type="nucleotide sequence ID" value="XM_017017868.2"/>
</dbReference>
<dbReference type="RefSeq" id="XP_016873358.1">
    <molecule id="P11498-1"/>
    <property type="nucleotide sequence ID" value="XM_017017869.2"/>
</dbReference>
<dbReference type="RefSeq" id="XP_016873359.1">
    <molecule id="P11498-1"/>
    <property type="nucleotide sequence ID" value="XM_017017870.2"/>
</dbReference>
<dbReference type="RefSeq" id="XP_016873360.1">
    <molecule id="P11498-1"/>
    <property type="nucleotide sequence ID" value="XM_017017871.2"/>
</dbReference>
<dbReference type="RefSeq" id="XP_016873361.1">
    <molecule id="P11498-1"/>
    <property type="nucleotide sequence ID" value="XM_017017872.3"/>
</dbReference>
<dbReference type="RefSeq" id="XP_054224998.1">
    <molecule id="P11498-1"/>
    <property type="nucleotide sequence ID" value="XM_054369023.1"/>
</dbReference>
<dbReference type="RefSeq" id="XP_054224999.1">
    <molecule id="P11498-1"/>
    <property type="nucleotide sequence ID" value="XM_054369024.1"/>
</dbReference>
<dbReference type="RefSeq" id="XP_054225000.1">
    <molecule id="P11498-1"/>
    <property type="nucleotide sequence ID" value="XM_054369025.1"/>
</dbReference>
<dbReference type="RefSeq" id="XP_054225001.1">
    <molecule id="P11498-1"/>
    <property type="nucleotide sequence ID" value="XM_054369026.1"/>
</dbReference>
<dbReference type="RefSeq" id="XP_054225002.1">
    <molecule id="P11498-1"/>
    <property type="nucleotide sequence ID" value="XM_054369027.1"/>
</dbReference>
<dbReference type="RefSeq" id="XP_054225003.1">
    <molecule id="P11498-1"/>
    <property type="nucleotide sequence ID" value="XM_054369028.1"/>
</dbReference>
<dbReference type="RefSeq" id="XP_054225004.1">
    <molecule id="P11498-1"/>
    <property type="nucleotide sequence ID" value="XM_054369029.1"/>
</dbReference>
<dbReference type="RefSeq" id="XP_054225005.1">
    <molecule id="P11498-1"/>
    <property type="nucleotide sequence ID" value="XM_054369030.1"/>
</dbReference>
<dbReference type="RefSeq" id="XP_054225006.1">
    <molecule id="P11498-1"/>
    <property type="nucleotide sequence ID" value="XM_054369031.1"/>
</dbReference>
<dbReference type="PDB" id="3BG3">
    <property type="method" value="X-ray"/>
    <property type="resolution" value="2.80 A"/>
    <property type="chains" value="A/B/C/D=482-1178"/>
</dbReference>
<dbReference type="PDB" id="3BG9">
    <property type="method" value="X-ray"/>
    <property type="resolution" value="3.00 A"/>
    <property type="chains" value="A/B/C/D=482-1178"/>
</dbReference>
<dbReference type="PDB" id="7WTA">
    <property type="method" value="EM"/>
    <property type="resolution" value="3.90 A"/>
    <property type="chains" value="A/B/C/D=1-1178"/>
</dbReference>
<dbReference type="PDB" id="7WTB">
    <property type="method" value="EM"/>
    <property type="resolution" value="3.70 A"/>
    <property type="chains" value="A/B/C/D=1-1178"/>
</dbReference>
<dbReference type="PDB" id="7WTC">
    <property type="method" value="EM"/>
    <property type="resolution" value="4.00 A"/>
    <property type="chains" value="A/B/C/D=1-1178"/>
</dbReference>
<dbReference type="PDB" id="7WTD">
    <property type="method" value="EM"/>
    <property type="resolution" value="3.90 A"/>
    <property type="chains" value="A/B/C/D=1-1178"/>
</dbReference>
<dbReference type="PDB" id="7WTE">
    <property type="method" value="EM"/>
    <property type="resolution" value="3.30 A"/>
    <property type="chains" value="A/B/C/D=1-1178"/>
</dbReference>
<dbReference type="PDB" id="8HWL">
    <property type="method" value="EM"/>
    <property type="resolution" value="5.63 A"/>
    <property type="chains" value="A/B/C/E=1-1178"/>
</dbReference>
<dbReference type="PDB" id="8J7O">
    <property type="method" value="EM"/>
    <property type="resolution" value="3.83 A"/>
    <property type="chains" value="A/B/C/E=1-1178"/>
</dbReference>
<dbReference type="PDB" id="8XL9">
    <property type="method" value="EM"/>
    <property type="resolution" value="2.61 A"/>
    <property type="chains" value="A/B/C/D=1-1178"/>
</dbReference>
<dbReference type="PDBsum" id="3BG3"/>
<dbReference type="PDBsum" id="3BG9"/>
<dbReference type="PDBsum" id="7WTA"/>
<dbReference type="PDBsum" id="7WTB"/>
<dbReference type="PDBsum" id="7WTC"/>
<dbReference type="PDBsum" id="7WTD"/>
<dbReference type="PDBsum" id="7WTE"/>
<dbReference type="PDBsum" id="8HWL"/>
<dbReference type="PDBsum" id="8J7O"/>
<dbReference type="PDBsum" id="8XL9"/>
<dbReference type="EMDB" id="EMD-32773"/>
<dbReference type="EMDB" id="EMD-32774"/>
<dbReference type="EMDB" id="EMD-32775"/>
<dbReference type="EMDB" id="EMD-32776"/>
<dbReference type="EMDB" id="EMD-32777"/>
<dbReference type="EMDB" id="EMD-32778"/>
<dbReference type="EMDB" id="EMD-32779"/>
<dbReference type="EMDB" id="EMD-32780"/>
<dbReference type="EMDB" id="EMD-32781"/>
<dbReference type="EMDB" id="EMD-32782"/>
<dbReference type="EMDB" id="EMD-35059"/>
<dbReference type="EMDB" id="EMD-36044"/>
<dbReference type="EMDB" id="EMD-38442"/>
<dbReference type="SMR" id="P11498"/>
<dbReference type="BioGRID" id="111124">
    <property type="interactions" value="215"/>
</dbReference>
<dbReference type="ComplexPortal" id="CPX-7142">
    <property type="entry name" value="Hydride transfer complex"/>
</dbReference>
<dbReference type="DIP" id="DIP-46372N"/>
<dbReference type="FunCoup" id="P11498">
    <property type="interactions" value="1475"/>
</dbReference>
<dbReference type="IntAct" id="P11498">
    <property type="interactions" value="67"/>
</dbReference>
<dbReference type="MINT" id="P11498"/>
<dbReference type="STRING" id="9606.ENSP00000498994"/>
<dbReference type="DrugBank" id="DB07497">
    <property type="generic name" value="5-(hexahydro-2-oxo-1H-thieno[3,4-D]imidazol-6-yl)pentanal"/>
</dbReference>
<dbReference type="DrugBank" id="DB00121">
    <property type="generic name" value="Biotin"/>
</dbReference>
<dbReference type="DrugBank" id="DB00119">
    <property type="generic name" value="Pyruvic acid"/>
</dbReference>
<dbReference type="GlyGen" id="P11498">
    <property type="glycosylation" value="4 sites, 1 O-linked glycan (2 sites)"/>
</dbReference>
<dbReference type="iPTMnet" id="P11498"/>
<dbReference type="PhosphoSitePlus" id="P11498"/>
<dbReference type="SwissPalm" id="P11498"/>
<dbReference type="BioMuta" id="PC"/>
<dbReference type="DMDM" id="1709947"/>
<dbReference type="jPOST" id="P11498"/>
<dbReference type="MassIVE" id="P11498"/>
<dbReference type="PaxDb" id="9606-ENSP00000377532"/>
<dbReference type="PeptideAtlas" id="P11498"/>
<dbReference type="ProteomicsDB" id="4659"/>
<dbReference type="ProteomicsDB" id="52785">
    <molecule id="P11498-1"/>
</dbReference>
<dbReference type="Pumba" id="P11498"/>
<dbReference type="Antibodypedia" id="30264">
    <property type="antibodies" value="378 antibodies from 36 providers"/>
</dbReference>
<dbReference type="DNASU" id="5091"/>
<dbReference type="Ensembl" id="ENST00000393955.6">
    <molecule id="P11498-1"/>
    <property type="protein sequence ID" value="ENSP00000377527.2"/>
    <property type="gene ID" value="ENSG00000173599.15"/>
</dbReference>
<dbReference type="Ensembl" id="ENST00000393958.7">
    <molecule id="P11498-1"/>
    <property type="protein sequence ID" value="ENSP00000377530.2"/>
    <property type="gene ID" value="ENSG00000173599.15"/>
</dbReference>
<dbReference type="Ensembl" id="ENST00000393960.7">
    <molecule id="P11498-1"/>
    <property type="protein sequence ID" value="ENSP00000377532.1"/>
    <property type="gene ID" value="ENSG00000173599.15"/>
</dbReference>
<dbReference type="Ensembl" id="ENST00000524491.6">
    <molecule id="P11498-2"/>
    <property type="protein sequence ID" value="ENSP00000434192.2"/>
    <property type="gene ID" value="ENSG00000173599.15"/>
</dbReference>
<dbReference type="Ensembl" id="ENST00000529047.6">
    <molecule id="P11498-1"/>
    <property type="protein sequence ID" value="ENSP00000435905.2"/>
    <property type="gene ID" value="ENSG00000173599.15"/>
</dbReference>
<dbReference type="Ensembl" id="ENST00000651036.1">
    <molecule id="P11498-1"/>
    <property type="protein sequence ID" value="ENSP00000498406.1"/>
    <property type="gene ID" value="ENSG00000173599.15"/>
</dbReference>
<dbReference type="Ensembl" id="ENST00000651854.1">
    <molecule id="P11498-1"/>
    <property type="protein sequence ID" value="ENSP00000498994.1"/>
    <property type="gene ID" value="ENSG00000173599.15"/>
</dbReference>
<dbReference type="Ensembl" id="ENST00000652125.1">
    <molecule id="P11498-1"/>
    <property type="protein sequence ID" value="ENSP00000498302.1"/>
    <property type="gene ID" value="ENSG00000173599.15"/>
</dbReference>
<dbReference type="GeneID" id="5091"/>
<dbReference type="KEGG" id="hsa:5091"/>
<dbReference type="MANE-Select" id="ENST00000393960.7">
    <property type="protein sequence ID" value="ENSP00000377532.1"/>
    <property type="RefSeq nucleotide sequence ID" value="NM_001040716.2"/>
    <property type="RefSeq protein sequence ID" value="NP_001035806.1"/>
</dbReference>
<dbReference type="UCSC" id="uc001ojn.2">
    <molecule id="P11498-1"/>
    <property type="organism name" value="human"/>
</dbReference>
<dbReference type="AGR" id="HGNC:8636"/>
<dbReference type="CTD" id="5091"/>
<dbReference type="DisGeNET" id="5091"/>
<dbReference type="GeneCards" id="PC"/>
<dbReference type="GeneReviews" id="PC"/>
<dbReference type="HGNC" id="HGNC:8636">
    <property type="gene designation" value="PC"/>
</dbReference>
<dbReference type="HPA" id="ENSG00000173599">
    <property type="expression patterns" value="Tissue enhanced (adipose tissue, liver)"/>
</dbReference>
<dbReference type="MalaCards" id="PC"/>
<dbReference type="MIM" id="266150">
    <property type="type" value="phenotype"/>
</dbReference>
<dbReference type="MIM" id="608786">
    <property type="type" value="gene"/>
</dbReference>
<dbReference type="neXtProt" id="NX_P11498"/>
<dbReference type="OpenTargets" id="ENSG00000173599"/>
<dbReference type="Orphanet" id="353320">
    <property type="disease" value="Pyruvate carboxylase deficiency, benign type"/>
</dbReference>
<dbReference type="Orphanet" id="353308">
    <property type="disease" value="Pyruvate carboxylase deficiency, infantile type"/>
</dbReference>
<dbReference type="Orphanet" id="353314">
    <property type="disease" value="Pyruvate carboxylase deficiency, severe neonatal type"/>
</dbReference>
<dbReference type="PharmGKB" id="PA32975"/>
<dbReference type="VEuPathDB" id="HostDB:ENSG00000173599"/>
<dbReference type="eggNOG" id="KOG0369">
    <property type="taxonomic scope" value="Eukaryota"/>
</dbReference>
<dbReference type="GeneTree" id="ENSGT00900000141164"/>
<dbReference type="HOGENOM" id="CLU_000395_0_1_1"/>
<dbReference type="InParanoid" id="P11498"/>
<dbReference type="OMA" id="RRQKVWE"/>
<dbReference type="OrthoDB" id="196847at2759"/>
<dbReference type="PAN-GO" id="P11498">
    <property type="GO annotations" value="4 GO annotations based on evolutionary models"/>
</dbReference>
<dbReference type="PhylomeDB" id="P11498"/>
<dbReference type="TreeFam" id="TF300535"/>
<dbReference type="BioCyc" id="MetaCyc:HS10697-MONOMER"/>
<dbReference type="BRENDA" id="6.4.1.1">
    <property type="organism ID" value="2681"/>
</dbReference>
<dbReference type="PathwayCommons" id="P11498"/>
<dbReference type="Reactome" id="R-HSA-196780">
    <property type="pathway name" value="Biotin transport and metabolism"/>
</dbReference>
<dbReference type="Reactome" id="R-HSA-3371599">
    <property type="pathway name" value="Defective HLCS causes multiple carboxylase deficiency"/>
</dbReference>
<dbReference type="Reactome" id="R-HSA-70263">
    <property type="pathway name" value="Gluconeogenesis"/>
</dbReference>
<dbReference type="Reactome" id="R-HSA-70268">
    <property type="pathway name" value="Pyruvate metabolism"/>
</dbReference>
<dbReference type="SABIO-RK" id="P11498"/>
<dbReference type="SignaLink" id="P11498"/>
<dbReference type="SIGNOR" id="P11498"/>
<dbReference type="UniPathway" id="UPA00138"/>
<dbReference type="BioGRID-ORCS" id="5091">
    <property type="hits" value="264 hits in 1160 CRISPR screens"/>
</dbReference>
<dbReference type="CD-CODE" id="FB4E32DD">
    <property type="entry name" value="Presynaptic clusters and postsynaptic densities"/>
</dbReference>
<dbReference type="ChiTaRS" id="PC">
    <property type="organism name" value="human"/>
</dbReference>
<dbReference type="EvolutionaryTrace" id="P11498"/>
<dbReference type="GenomeRNAi" id="5091"/>
<dbReference type="Pharos" id="P11498">
    <property type="development level" value="Tbio"/>
</dbReference>
<dbReference type="PRO" id="PR:P11498"/>
<dbReference type="Proteomes" id="UP000005640">
    <property type="component" value="Chromosome 11"/>
</dbReference>
<dbReference type="RNAct" id="P11498">
    <property type="molecule type" value="protein"/>
</dbReference>
<dbReference type="Bgee" id="ENSG00000173599">
    <property type="expression patterns" value="Expressed in right lobe of liver and 132 other cell types or tissues"/>
</dbReference>
<dbReference type="ExpressionAtlas" id="P11498">
    <property type="expression patterns" value="baseline and differential"/>
</dbReference>
<dbReference type="GO" id="GO:0005737">
    <property type="term" value="C:cytoplasm"/>
    <property type="evidence" value="ECO:0000314"/>
    <property type="project" value="AgBase"/>
</dbReference>
<dbReference type="GO" id="GO:0005829">
    <property type="term" value="C:cytosol"/>
    <property type="evidence" value="ECO:0000314"/>
    <property type="project" value="HPA"/>
</dbReference>
<dbReference type="GO" id="GO:0005759">
    <property type="term" value="C:mitochondrial matrix"/>
    <property type="evidence" value="ECO:0000304"/>
    <property type="project" value="Reactome"/>
</dbReference>
<dbReference type="GO" id="GO:0005739">
    <property type="term" value="C:mitochondrion"/>
    <property type="evidence" value="ECO:0000314"/>
    <property type="project" value="HPA"/>
</dbReference>
<dbReference type="GO" id="GO:0005524">
    <property type="term" value="F:ATP binding"/>
    <property type="evidence" value="ECO:0000304"/>
    <property type="project" value="ProtInc"/>
</dbReference>
<dbReference type="GO" id="GO:0009374">
    <property type="term" value="F:biotin binding"/>
    <property type="evidence" value="ECO:0000304"/>
    <property type="project" value="ProtInc"/>
</dbReference>
<dbReference type="GO" id="GO:0042802">
    <property type="term" value="F:identical protein binding"/>
    <property type="evidence" value="ECO:0000353"/>
    <property type="project" value="IntAct"/>
</dbReference>
<dbReference type="GO" id="GO:0046872">
    <property type="term" value="F:metal ion binding"/>
    <property type="evidence" value="ECO:0007669"/>
    <property type="project" value="UniProtKB-KW"/>
</dbReference>
<dbReference type="GO" id="GO:0004736">
    <property type="term" value="F:pyruvate carboxylase activity"/>
    <property type="evidence" value="ECO:0000315"/>
    <property type="project" value="UniProtKB"/>
</dbReference>
<dbReference type="GO" id="GO:0006094">
    <property type="term" value="P:gluconeogenesis"/>
    <property type="evidence" value="ECO:0000318"/>
    <property type="project" value="GO_Central"/>
</dbReference>
<dbReference type="GO" id="GO:0006629">
    <property type="term" value="P:lipid metabolic process"/>
    <property type="evidence" value="ECO:0007669"/>
    <property type="project" value="UniProtKB-KW"/>
</dbReference>
<dbReference type="GO" id="GO:0006734">
    <property type="term" value="P:NADH metabolic process"/>
    <property type="evidence" value="ECO:0000314"/>
    <property type="project" value="ComplexPortal"/>
</dbReference>
<dbReference type="GO" id="GO:0006739">
    <property type="term" value="P:NADP metabolic process"/>
    <property type="evidence" value="ECO:0000314"/>
    <property type="project" value="ComplexPortal"/>
</dbReference>
<dbReference type="GO" id="GO:0010629">
    <property type="term" value="P:negative regulation of gene expression"/>
    <property type="evidence" value="ECO:0000315"/>
    <property type="project" value="AgBase"/>
</dbReference>
<dbReference type="GO" id="GO:0044794">
    <property type="term" value="P:positive regulation by host of viral process"/>
    <property type="evidence" value="ECO:0000315"/>
    <property type="project" value="AgBase"/>
</dbReference>
<dbReference type="GO" id="GO:0006090">
    <property type="term" value="P:pyruvate metabolic process"/>
    <property type="evidence" value="ECO:0000318"/>
    <property type="project" value="GO_Central"/>
</dbReference>
<dbReference type="GO" id="GO:0019076">
    <property type="term" value="P:viral release from host cell"/>
    <property type="evidence" value="ECO:0000315"/>
    <property type="project" value="AgBase"/>
</dbReference>
<dbReference type="GO" id="GO:0019074">
    <property type="term" value="P:viral RNA genome packaging"/>
    <property type="evidence" value="ECO:0000315"/>
    <property type="project" value="AgBase"/>
</dbReference>
<dbReference type="CDD" id="cd06850">
    <property type="entry name" value="biotinyl_domain"/>
    <property type="match status" value="1"/>
</dbReference>
<dbReference type="CDD" id="cd07937">
    <property type="entry name" value="DRE_TIM_PC_TC_5S"/>
    <property type="match status" value="1"/>
</dbReference>
<dbReference type="FunFam" id="2.40.50.100:FF:000003">
    <property type="entry name" value="Acetyl-CoA carboxylase biotin carboxyl carrier protein"/>
    <property type="match status" value="1"/>
</dbReference>
<dbReference type="FunFam" id="3.30.1490.20:FF:000018">
    <property type="entry name" value="Biotin carboxylase"/>
    <property type="match status" value="1"/>
</dbReference>
<dbReference type="FunFam" id="3.40.50.20:FF:000010">
    <property type="entry name" value="Propionyl-CoA carboxylase subunit alpha"/>
    <property type="match status" value="1"/>
</dbReference>
<dbReference type="FunFam" id="1.10.472.90:FF:000001">
    <property type="entry name" value="Pyruvate carboxylase"/>
    <property type="match status" value="1"/>
</dbReference>
<dbReference type="FunFam" id="3.10.600.10:FF:000001">
    <property type="entry name" value="Pyruvate carboxylase"/>
    <property type="match status" value="1"/>
</dbReference>
<dbReference type="FunFam" id="3.20.20.70:FF:000033">
    <property type="entry name" value="Pyruvate carboxylase"/>
    <property type="match status" value="1"/>
</dbReference>
<dbReference type="FunFam" id="3.30.470.20:FF:000012">
    <property type="entry name" value="Pyruvate carboxylase"/>
    <property type="match status" value="1"/>
</dbReference>
<dbReference type="FunFam" id="1.10.10.60:FF:000512">
    <property type="entry name" value="Pyruvate carboxylase, mitochondrial"/>
    <property type="match status" value="1"/>
</dbReference>
<dbReference type="Gene3D" id="2.40.50.100">
    <property type="match status" value="1"/>
</dbReference>
<dbReference type="Gene3D" id="3.20.20.70">
    <property type="entry name" value="Aldolase class I"/>
    <property type="match status" value="1"/>
</dbReference>
<dbReference type="Gene3D" id="3.30.470.20">
    <property type="entry name" value="ATP-grasp fold, B domain"/>
    <property type="match status" value="1"/>
</dbReference>
<dbReference type="Gene3D" id="3.10.600.10">
    <property type="entry name" value="pyruvate carboxylase f1077a mutant domain"/>
    <property type="match status" value="1"/>
</dbReference>
<dbReference type="InterPro" id="IPR013785">
    <property type="entry name" value="Aldolase_TIM"/>
</dbReference>
<dbReference type="InterPro" id="IPR011761">
    <property type="entry name" value="ATP-grasp"/>
</dbReference>
<dbReference type="InterPro" id="IPR005481">
    <property type="entry name" value="BC-like_N"/>
</dbReference>
<dbReference type="InterPro" id="IPR001882">
    <property type="entry name" value="Biotin_BS"/>
</dbReference>
<dbReference type="InterPro" id="IPR011764">
    <property type="entry name" value="Biotin_carboxylation_dom"/>
</dbReference>
<dbReference type="InterPro" id="IPR005482">
    <property type="entry name" value="Biotin_COase_C"/>
</dbReference>
<dbReference type="InterPro" id="IPR000089">
    <property type="entry name" value="Biotin_lipoyl"/>
</dbReference>
<dbReference type="InterPro" id="IPR003379">
    <property type="entry name" value="Carboxylase_cons_dom"/>
</dbReference>
<dbReference type="InterPro" id="IPR005479">
    <property type="entry name" value="CbamoylP_synth_lsu-like_ATP-bd"/>
</dbReference>
<dbReference type="InterPro" id="IPR055268">
    <property type="entry name" value="PCB-like"/>
</dbReference>
<dbReference type="InterPro" id="IPR016185">
    <property type="entry name" value="PreATP-grasp_dom_sf"/>
</dbReference>
<dbReference type="InterPro" id="IPR000891">
    <property type="entry name" value="PYR_CT"/>
</dbReference>
<dbReference type="InterPro" id="IPR005930">
    <property type="entry name" value="Pyruv_COase"/>
</dbReference>
<dbReference type="InterPro" id="IPR011054">
    <property type="entry name" value="Rudment_hybrid_motif"/>
</dbReference>
<dbReference type="InterPro" id="IPR011053">
    <property type="entry name" value="Single_hybrid_motif"/>
</dbReference>
<dbReference type="NCBIfam" id="NF006761">
    <property type="entry name" value="PRK09282.1"/>
    <property type="match status" value="1"/>
</dbReference>
<dbReference type="NCBIfam" id="NF009554">
    <property type="entry name" value="PRK12999.1"/>
    <property type="match status" value="1"/>
</dbReference>
<dbReference type="NCBIfam" id="TIGR01235">
    <property type="entry name" value="pyruv_carbox"/>
    <property type="match status" value="1"/>
</dbReference>
<dbReference type="PANTHER" id="PTHR43778">
    <property type="entry name" value="PYRUVATE CARBOXYLASE"/>
    <property type="match status" value="1"/>
</dbReference>
<dbReference type="PANTHER" id="PTHR43778:SF2">
    <property type="entry name" value="PYRUVATE CARBOXYLASE, MITOCHONDRIAL"/>
    <property type="match status" value="1"/>
</dbReference>
<dbReference type="Pfam" id="PF02785">
    <property type="entry name" value="Biotin_carb_C"/>
    <property type="match status" value="1"/>
</dbReference>
<dbReference type="Pfam" id="PF00289">
    <property type="entry name" value="Biotin_carb_N"/>
    <property type="match status" value="1"/>
</dbReference>
<dbReference type="Pfam" id="PF00364">
    <property type="entry name" value="Biotin_lipoyl"/>
    <property type="match status" value="1"/>
</dbReference>
<dbReference type="Pfam" id="PF02786">
    <property type="entry name" value="CPSase_L_D2"/>
    <property type="match status" value="1"/>
</dbReference>
<dbReference type="Pfam" id="PF00682">
    <property type="entry name" value="HMGL-like"/>
    <property type="match status" value="1"/>
</dbReference>
<dbReference type="Pfam" id="PF02436">
    <property type="entry name" value="PYC_OADA"/>
    <property type="match status" value="1"/>
</dbReference>
<dbReference type="PIRSF" id="PIRSF001594">
    <property type="entry name" value="Pyruv_carbox"/>
    <property type="match status" value="1"/>
</dbReference>
<dbReference type="SMART" id="SM00878">
    <property type="entry name" value="Biotin_carb_C"/>
    <property type="match status" value="1"/>
</dbReference>
<dbReference type="SUPFAM" id="SSF51569">
    <property type="entry name" value="Aldolase"/>
    <property type="match status" value="1"/>
</dbReference>
<dbReference type="SUPFAM" id="SSF56059">
    <property type="entry name" value="Glutathione synthetase ATP-binding domain-like"/>
    <property type="match status" value="1"/>
</dbReference>
<dbReference type="SUPFAM" id="SSF89000">
    <property type="entry name" value="post-HMGL domain-like"/>
    <property type="match status" value="1"/>
</dbReference>
<dbReference type="SUPFAM" id="SSF52440">
    <property type="entry name" value="PreATP-grasp domain"/>
    <property type="match status" value="1"/>
</dbReference>
<dbReference type="SUPFAM" id="SSF51246">
    <property type="entry name" value="Rudiment single hybrid motif"/>
    <property type="match status" value="1"/>
</dbReference>
<dbReference type="SUPFAM" id="SSF51230">
    <property type="entry name" value="Single hybrid motif"/>
    <property type="match status" value="1"/>
</dbReference>
<dbReference type="PROSITE" id="PS50975">
    <property type="entry name" value="ATP_GRASP"/>
    <property type="match status" value="1"/>
</dbReference>
<dbReference type="PROSITE" id="PS50979">
    <property type="entry name" value="BC"/>
    <property type="match status" value="1"/>
</dbReference>
<dbReference type="PROSITE" id="PS00188">
    <property type="entry name" value="BIOTIN"/>
    <property type="match status" value="1"/>
</dbReference>
<dbReference type="PROSITE" id="PS50968">
    <property type="entry name" value="BIOTINYL_LIPOYL"/>
    <property type="match status" value="1"/>
</dbReference>
<dbReference type="PROSITE" id="PS50991">
    <property type="entry name" value="PYR_CT"/>
    <property type="match status" value="1"/>
</dbReference>
<feature type="transit peptide" description="Mitochondrion" evidence="4">
    <location>
        <begin position="1"/>
        <end position="20"/>
    </location>
</feature>
<feature type="chain" id="PRO_0000002840" description="Pyruvate carboxylase, mitochondrial">
    <location>
        <begin position="21"/>
        <end position="1178"/>
    </location>
</feature>
<feature type="domain" description="Biotin carboxylation">
    <location>
        <begin position="36"/>
        <end position="486"/>
    </location>
</feature>
<feature type="domain" description="ATP-grasp" evidence="5">
    <location>
        <begin position="156"/>
        <end position="353"/>
    </location>
</feature>
<feature type="domain" description="Pyruvate carboxyltransferase" evidence="7">
    <location>
        <begin position="563"/>
        <end position="832"/>
    </location>
</feature>
<feature type="domain" description="Biotinyl-binding" evidence="6">
    <location>
        <begin position="1109"/>
        <end position="1178"/>
    </location>
</feature>
<feature type="active site" evidence="1">
    <location>
        <position position="328"/>
    </location>
</feature>
<feature type="binding site" evidence="1">
    <location>
        <position position="152"/>
    </location>
    <ligand>
        <name>ATP</name>
        <dbReference type="ChEBI" id="CHEBI:30616"/>
    </ligand>
</feature>
<feature type="binding site" evidence="1">
    <location>
        <position position="236"/>
    </location>
    <ligand>
        <name>ATP</name>
        <dbReference type="ChEBI" id="CHEBI:30616"/>
    </ligand>
</feature>
<feature type="binding site" evidence="1">
    <location>
        <position position="271"/>
    </location>
    <ligand>
        <name>ATP</name>
        <dbReference type="ChEBI" id="CHEBI:30616"/>
    </ligand>
</feature>
<feature type="binding site">
    <location>
        <begin position="571"/>
        <end position="575"/>
    </location>
    <ligand>
        <name>substrate</name>
    </ligand>
</feature>
<feature type="binding site" evidence="8">
    <location>
        <position position="572"/>
    </location>
    <ligand>
        <name>Mn(2+)</name>
        <dbReference type="ChEBI" id="CHEBI:29035"/>
    </ligand>
</feature>
<feature type="binding site">
    <location>
        <position position="644"/>
    </location>
    <ligand>
        <name>substrate</name>
    </ligand>
</feature>
<feature type="binding site" description="via carbamate group" evidence="8">
    <location>
        <position position="741"/>
    </location>
    <ligand>
        <name>Mn(2+)</name>
        <dbReference type="ChEBI" id="CHEBI:29035"/>
    </ligand>
</feature>
<feature type="binding site" evidence="8">
    <location>
        <position position="771"/>
    </location>
    <ligand>
        <name>Mn(2+)</name>
        <dbReference type="ChEBI" id="CHEBI:29035"/>
    </ligand>
</feature>
<feature type="binding site" evidence="8">
    <location>
        <position position="773"/>
    </location>
    <ligand>
        <name>Mn(2+)</name>
        <dbReference type="ChEBI" id="CHEBI:29035"/>
    </ligand>
</feature>
<feature type="binding site">
    <location>
        <position position="908"/>
    </location>
    <ligand>
        <name>substrate</name>
    </ligand>
</feature>
<feature type="modified residue" description="N6-acetyllysine" evidence="3">
    <location>
        <position position="35"/>
    </location>
</feature>
<feature type="modified residue" description="N6-acetyllysine" evidence="3">
    <location>
        <position position="39"/>
    </location>
</feature>
<feature type="modified residue" description="N6-acetyllysine; alternate" evidence="3">
    <location>
        <position position="79"/>
    </location>
</feature>
<feature type="modified residue" description="N6-succinyllysine; alternate" evidence="3">
    <location>
        <position position="79"/>
    </location>
</feature>
<feature type="modified residue" description="N6-acetyllysine" evidence="3">
    <location>
        <position position="148"/>
    </location>
</feature>
<feature type="modified residue" description="N6-acetyllysine" evidence="3">
    <location>
        <position position="152"/>
    </location>
</feature>
<feature type="modified residue" description="N6-acetyllysine" evidence="3">
    <location>
        <position position="241"/>
    </location>
</feature>
<feature type="modified residue" description="N6-acetyllysine" evidence="3">
    <location>
        <position position="297"/>
    </location>
</feature>
<feature type="modified residue" description="N6-acetyllysine" evidence="3">
    <location>
        <position position="319"/>
    </location>
</feature>
<feature type="modified residue" description="N6-acetyllysine" evidence="3">
    <location>
        <position position="434"/>
    </location>
</feature>
<feature type="modified residue" description="N6-succinyllysine" evidence="3">
    <location>
        <position position="442"/>
    </location>
</feature>
<feature type="modified residue" description="N6-acetyllysine" evidence="3">
    <location>
        <position position="589"/>
    </location>
</feature>
<feature type="modified residue" description="N6-acetyllysine" evidence="3">
    <location>
        <position position="661"/>
    </location>
</feature>
<feature type="modified residue" description="N6-acetyllysine" evidence="3">
    <location>
        <position position="717"/>
    </location>
</feature>
<feature type="modified residue" description="N6-carboxylysine" evidence="8">
    <location>
        <position position="741"/>
    </location>
</feature>
<feature type="modified residue" description="N6-acetyllysine" evidence="3">
    <location>
        <position position="748"/>
    </location>
</feature>
<feature type="modified residue" description="N6-acetyllysine" evidence="3">
    <location>
        <position position="892"/>
    </location>
</feature>
<feature type="modified residue" description="N6-acetyllysine" evidence="3">
    <location>
        <position position="969"/>
    </location>
</feature>
<feature type="modified residue" description="N6-acetyllysine" evidence="3">
    <location>
        <position position="992"/>
    </location>
</feature>
<feature type="modified residue" description="Phosphothreonine" evidence="2">
    <location>
        <position position="1003"/>
    </location>
</feature>
<feature type="modified residue" description="N6-acetyllysine" evidence="3">
    <location>
        <position position="1061"/>
    </location>
</feature>
<feature type="modified residue" description="N6-acetyllysine" evidence="19">
    <location>
        <position position="1090"/>
    </location>
</feature>
<feature type="modified residue" description="N6-acetyllysine" evidence="3">
    <location>
        <position position="1124"/>
    </location>
</feature>
<feature type="modified residue" description="N6-biotinyllysine" evidence="6 11 12">
    <location>
        <position position="1144"/>
    </location>
</feature>
<feature type="splice variant" id="VSP_056358" description="In isoform 2." evidence="15">
    <original>TNIAFLQNVLNNQQFLAGTVDTQFIDENPELFQLRPAQNRAQKLLHYLGHVMVNGPTTPIPVKASPSPTDPVV</original>
    <variation>VRRHQAQPLAAALGRPCGQEARRPQAAVTAPTGPGSPTLVRVPPAARVLSSRLGGPSQTTPETSTEVSPTILL</variation>
    <location>
        <begin position="457"/>
        <end position="529"/>
    </location>
</feature>
<feature type="splice variant" id="VSP_056359" description="In isoform 2." evidence="15">
    <location>
        <begin position="530"/>
        <end position="1178"/>
    </location>
</feature>
<feature type="sequence variant" id="VAR_048416" description="In dbSNP:rs7104156.">
    <original>H</original>
    <variation>L</variation>
    <location>
        <position position="76"/>
    </location>
</feature>
<feature type="sequence variant" id="VAR_015199" description="In PC deficiency; mild; strongly reduced pyruvate carboxylase activity; dbSNP:rs28940591." evidence="9 13">
    <original>V</original>
    <variation>A</variation>
    <location>
        <position position="145"/>
    </location>
</feature>
<feature type="sequence variant" id="VAR_058957" description="In PC deficiency; dbSNP:rs119103241." evidence="9">
    <original>R</original>
    <variation>Q</variation>
    <location>
        <position position="156"/>
    </location>
</feature>
<feature type="sequence variant" id="VAR_058958" description="In PC deficiency; dbSNP:rs1258494752." evidence="9">
    <original>R</original>
    <variation>W</variation>
    <location>
        <position position="270"/>
    </location>
</feature>
<feature type="sequence variant" id="VAR_058959" description="In PC deficiency." evidence="9">
    <original>Y</original>
    <variation>C</variation>
    <location>
        <position position="304"/>
    </location>
</feature>
<feature type="sequence variant" id="VAR_015200" description="In PC deficiency; mild; strongly reduced pyruvate carboxylase activity; dbSNP:rs113994143." evidence="9 13">
    <original>R</original>
    <variation>C</variation>
    <location>
        <position position="451"/>
    </location>
</feature>
<feature type="sequence variant" id="VAR_058960" description="In PC deficiency; dbSNP:rs119103242." evidence="9">
    <original>R</original>
    <variation>L</variation>
    <location>
        <position position="583"/>
    </location>
</feature>
<feature type="sequence variant" id="VAR_008095" description="In PC deficiency; mild; dbSNP:rs28940589." evidence="9 14">
    <original>A</original>
    <variation>T</variation>
    <location>
        <position position="610"/>
    </location>
</feature>
<feature type="sequence variant" id="VAR_058961" description="In PC deficiency; dbSNP:rs113994145." evidence="9">
    <original>R</original>
    <variation>Q</variation>
    <location>
        <position position="631"/>
    </location>
</feature>
<feature type="sequence variant" id="VAR_008096" description="In PC deficiency; mild; dbSNP:rs28940590." evidence="9 14">
    <original>M</original>
    <variation>I</variation>
    <location>
        <position position="743"/>
    </location>
</feature>
<feature type="sequence variant" id="VAR_058962" description="In PC deficiency." evidence="9">
    <location>
        <begin position="1131"/>
        <end position="1133"/>
    </location>
</feature>
<feature type="mutagenesis site" description="Loss of tetramerization and enzyme activity, resulting in an inactive homodimer." evidence="8">
    <original>F</original>
    <variation>A</variation>
    <variation>E</variation>
    <location>
        <position position="1077"/>
    </location>
</feature>
<feature type="sequence conflict" description="In Ref. 2; AAB31500." evidence="16" ref="2">
    <original>LA</original>
    <variation>WP</variation>
    <location>
        <begin position="225"/>
        <end position="226"/>
    </location>
</feature>
<feature type="sequence conflict" description="In Ref. 3; AAA82937." evidence="16" ref="3">
    <original>A</original>
    <variation>S</variation>
    <location>
        <position position="352"/>
    </location>
</feature>
<feature type="sequence conflict" description="In Ref. 2; AAB31500." evidence="16" ref="2">
    <original>RS</original>
    <variation>PT</variation>
    <location>
        <begin position="385"/>
        <end position="386"/>
    </location>
</feature>
<feature type="sequence conflict" description="In Ref. 2; AAB31500." evidence="16" ref="2">
    <original>EL</original>
    <variation>DV</variation>
    <location>
        <begin position="486"/>
        <end position="487"/>
    </location>
</feature>
<feature type="sequence conflict" description="In Ref. 2; AAB31500." evidence="16" ref="2">
    <original>P</original>
    <variation>R</variation>
    <location>
        <position position="638"/>
    </location>
</feature>
<feature type="sequence conflict" description="In Ref. 2; AAB31500." evidence="16" ref="2">
    <original>E</original>
    <variation>A</variation>
    <location>
        <position position="729"/>
    </location>
</feature>
<feature type="sequence conflict" description="In Ref. 2; AAB31500." evidence="16" ref="2">
    <original>DT</original>
    <variation>AP</variation>
    <location>
        <begin position="774"/>
        <end position="775"/>
    </location>
</feature>
<feature type="strand" evidence="22">
    <location>
        <begin position="39"/>
        <end position="42"/>
    </location>
</feature>
<feature type="helix" evidence="22">
    <location>
        <begin position="47"/>
        <end position="58"/>
    </location>
</feature>
<feature type="strand" evidence="22">
    <location>
        <begin position="62"/>
        <end position="67"/>
    </location>
</feature>
<feature type="strand" evidence="22">
    <location>
        <begin position="75"/>
        <end position="77"/>
    </location>
</feature>
<feature type="strand" evidence="22">
    <location>
        <begin position="80"/>
        <end position="85"/>
    </location>
</feature>
<feature type="turn" evidence="22">
    <location>
        <begin position="92"/>
        <end position="94"/>
    </location>
</feature>
<feature type="helix" evidence="22">
    <location>
        <begin position="95"/>
        <end position="97"/>
    </location>
</feature>
<feature type="helix" evidence="22">
    <location>
        <begin position="99"/>
        <end position="108"/>
    </location>
</feature>
<feature type="strand" evidence="22">
    <location>
        <begin position="113"/>
        <end position="115"/>
    </location>
</feature>
<feature type="turn" evidence="22">
    <location>
        <begin position="117"/>
        <end position="119"/>
    </location>
</feature>
<feature type="helix" evidence="22">
    <location>
        <begin position="125"/>
        <end position="133"/>
    </location>
</feature>
<feature type="strand" evidence="22">
    <location>
        <begin position="137"/>
        <end position="141"/>
    </location>
</feature>
<feature type="helix" evidence="22">
    <location>
        <begin position="143"/>
        <end position="148"/>
    </location>
</feature>
<feature type="strand" evidence="22">
    <location>
        <begin position="149"/>
        <end position="151"/>
    </location>
</feature>
<feature type="helix" evidence="22">
    <location>
        <begin position="152"/>
        <end position="161"/>
    </location>
</feature>
<feature type="helix" evidence="22">
    <location>
        <begin position="177"/>
        <end position="186"/>
    </location>
</feature>
<feature type="strand" evidence="22">
    <location>
        <begin position="191"/>
        <end position="200"/>
    </location>
</feature>
<feature type="helix" evidence="22">
    <location>
        <begin position="211"/>
        <end position="226"/>
    </location>
</feature>
<feature type="strand" evidence="22">
    <location>
        <begin position="233"/>
        <end position="237"/>
    </location>
</feature>
<feature type="strand" evidence="22">
    <location>
        <begin position="245"/>
        <end position="251"/>
    </location>
</feature>
<feature type="strand" evidence="22">
    <location>
        <begin position="257"/>
        <end position="279"/>
    </location>
</feature>
<feature type="helix" evidence="22">
    <location>
        <begin position="285"/>
        <end position="302"/>
    </location>
</feature>
<feature type="strand" evidence="22">
    <location>
        <begin position="306"/>
        <end position="311"/>
    </location>
</feature>
<feature type="helix" evidence="22">
    <location>
        <begin position="333"/>
        <end position="340"/>
    </location>
</feature>
<feature type="helix" evidence="22">
    <location>
        <begin position="344"/>
        <end position="353"/>
    </location>
</feature>
<feature type="helix" evidence="22">
    <location>
        <begin position="357"/>
        <end position="360"/>
    </location>
</feature>
<feature type="turn" evidence="22">
    <location>
        <begin position="364"/>
        <end position="366"/>
    </location>
</feature>
<feature type="strand" evidence="22">
    <location>
        <begin position="371"/>
        <end position="379"/>
    </location>
</feature>
<feature type="turn" evidence="22">
    <location>
        <begin position="383"/>
        <end position="386"/>
    </location>
</feature>
<feature type="strand" evidence="22">
    <location>
        <begin position="387"/>
        <end position="389"/>
    </location>
</feature>
<feature type="strand" evidence="22">
    <location>
        <begin position="396"/>
        <end position="398"/>
    </location>
</feature>
<feature type="strand" evidence="22">
    <location>
        <begin position="405"/>
        <end position="411"/>
    </location>
</feature>
<feature type="strand" evidence="22">
    <location>
        <begin position="420"/>
        <end position="422"/>
    </location>
</feature>
<feature type="strand" evidence="22">
    <location>
        <begin position="425"/>
        <end position="435"/>
    </location>
</feature>
<feature type="helix" evidence="22">
    <location>
        <begin position="436"/>
        <end position="449"/>
    </location>
</feature>
<feature type="strand" evidence="22">
    <location>
        <begin position="451"/>
        <end position="455"/>
    </location>
</feature>
<feature type="helix" evidence="22">
    <location>
        <begin position="459"/>
        <end position="467"/>
    </location>
</feature>
<feature type="helix" evidence="22">
    <location>
        <begin position="469"/>
        <end position="473"/>
    </location>
</feature>
<feature type="helix" evidence="22">
    <location>
        <begin position="478"/>
        <end position="480"/>
    </location>
</feature>
<feature type="turn" evidence="22">
    <location>
        <begin position="481"/>
        <end position="483"/>
    </location>
</feature>
<feature type="turn" evidence="22">
    <location>
        <begin position="485"/>
        <end position="489"/>
    </location>
</feature>
<feature type="helix" evidence="23">
    <location>
        <begin position="497"/>
        <end position="510"/>
    </location>
</feature>
<feature type="helix" evidence="23">
    <location>
        <begin position="541"/>
        <end position="558"/>
    </location>
</feature>
<feature type="strand" evidence="23">
    <location>
        <begin position="564"/>
        <end position="567"/>
    </location>
</feature>
<feature type="turn" evidence="23">
    <location>
        <begin position="569"/>
        <end position="571"/>
    </location>
</feature>
<feature type="helix" evidence="23">
    <location>
        <begin position="572"/>
        <end position="577"/>
    </location>
</feature>
<feature type="helix" evidence="23">
    <location>
        <begin position="584"/>
        <end position="588"/>
    </location>
</feature>
<feature type="helix" evidence="23">
    <location>
        <begin position="591"/>
        <end position="597"/>
    </location>
</feature>
<feature type="strand" evidence="23">
    <location>
        <begin position="604"/>
        <end position="608"/>
    </location>
</feature>
<feature type="helix" evidence="23">
    <location>
        <begin position="611"/>
        <end position="617"/>
    </location>
</feature>
<feature type="helix" evidence="23">
    <location>
        <begin position="623"/>
        <end position="633"/>
    </location>
</feature>
<feature type="strand" evidence="20">
    <location>
        <begin position="635"/>
        <end position="637"/>
    </location>
</feature>
<feature type="strand" evidence="23">
    <location>
        <begin position="639"/>
        <end position="645"/>
    </location>
</feature>
<feature type="turn" evidence="23">
    <location>
        <begin position="646"/>
        <end position="649"/>
    </location>
</feature>
<feature type="strand" evidence="23">
    <location>
        <begin position="650"/>
        <end position="652"/>
    </location>
</feature>
<feature type="helix" evidence="23">
    <location>
        <begin position="656"/>
        <end position="669"/>
    </location>
</feature>
<feature type="strand" evidence="23">
    <location>
        <begin position="673"/>
        <end position="677"/>
    </location>
</feature>
<feature type="helix" evidence="23">
    <location>
        <begin position="683"/>
        <end position="695"/>
    </location>
</feature>
<feature type="strand" evidence="23">
    <location>
        <begin position="699"/>
        <end position="705"/>
    </location>
</feature>
<feature type="helix" evidence="23">
    <location>
        <begin position="720"/>
        <end position="732"/>
    </location>
</feature>
<feature type="strand" evidence="23">
    <location>
        <begin position="736"/>
        <end position="745"/>
    </location>
</feature>
<feature type="helix" evidence="23">
    <location>
        <begin position="749"/>
        <end position="762"/>
    </location>
</feature>
<feature type="strand" evidence="23">
    <location>
        <begin position="768"/>
        <end position="772"/>
    </location>
</feature>
<feature type="strand" evidence="23">
    <location>
        <begin position="775"/>
        <end position="777"/>
    </location>
</feature>
<feature type="helix" evidence="23">
    <location>
        <begin position="779"/>
        <end position="789"/>
    </location>
</feature>
<feature type="strand" evidence="23">
    <location>
        <begin position="793"/>
        <end position="797"/>
    </location>
</feature>
<feature type="helix" evidence="23">
    <location>
        <begin position="799"/>
        <end position="801"/>
    </location>
</feature>
<feature type="strand" evidence="23">
    <location>
        <begin position="803"/>
        <end position="806"/>
    </location>
</feature>
<feature type="helix" evidence="23">
    <location>
        <begin position="810"/>
        <end position="815"/>
    </location>
</feature>
<feature type="turn" evidence="23">
    <location>
        <begin position="816"/>
        <end position="819"/>
    </location>
</feature>
<feature type="helix" evidence="23">
    <location>
        <begin position="828"/>
        <end position="842"/>
    </location>
</feature>
<feature type="helix" evidence="23">
    <location>
        <begin position="843"/>
        <end position="848"/>
    </location>
</feature>
<feature type="helix" evidence="23">
    <location>
        <begin position="850"/>
        <end position="852"/>
    </location>
</feature>
<feature type="helix" evidence="23">
    <location>
        <begin position="861"/>
        <end position="864"/>
    </location>
</feature>
<feature type="helix" evidence="23">
    <location>
        <begin position="868"/>
        <end position="879"/>
    </location>
</feature>
<feature type="turn" evidence="23">
    <location>
        <begin position="880"/>
        <end position="882"/>
    </location>
</feature>
<feature type="helix" evidence="22">
    <location>
        <begin position="884"/>
        <end position="886"/>
    </location>
</feature>
<feature type="helix" evidence="23">
    <location>
        <begin position="887"/>
        <end position="900"/>
    </location>
</feature>
<feature type="helix" evidence="23">
    <location>
        <begin position="909"/>
        <end position="923"/>
    </location>
</feature>
<feature type="helix" evidence="23">
    <location>
        <begin position="928"/>
        <end position="933"/>
    </location>
</feature>
<feature type="turn" evidence="23">
    <location>
        <begin position="934"/>
        <end position="937"/>
    </location>
</feature>
<feature type="helix" evidence="23">
    <location>
        <begin position="942"/>
        <end position="949"/>
    </location>
</feature>
<feature type="helix" evidence="23">
    <location>
        <begin position="961"/>
        <end position="967"/>
    </location>
</feature>
<feature type="strand" evidence="20">
    <location>
        <begin position="969"/>
        <end position="971"/>
    </location>
</feature>
<feature type="turn" evidence="23">
    <location>
        <begin position="979"/>
        <end position="981"/>
    </location>
</feature>
<feature type="helix" evidence="23">
    <location>
        <begin position="987"/>
        <end position="995"/>
    </location>
</feature>
<feature type="turn" evidence="21">
    <location>
        <begin position="996"/>
        <end position="998"/>
    </location>
</feature>
<feature type="helix" evidence="23">
    <location>
        <begin position="1004"/>
        <end position="1012"/>
    </location>
</feature>
<feature type="helix" evidence="23">
    <location>
        <begin position="1014"/>
        <end position="1026"/>
    </location>
</feature>
<feature type="helix" evidence="23">
    <location>
        <begin position="1030"/>
        <end position="1032"/>
    </location>
</feature>
<feature type="helix" evidence="23">
    <location>
        <begin position="1035"/>
        <end position="1040"/>
    </location>
</feature>
<feature type="strand" evidence="23">
    <location>
        <begin position="1048"/>
        <end position="1051"/>
    </location>
</feature>
<feature type="strand" evidence="23">
    <location>
        <begin position="1053"/>
        <end position="1055"/>
    </location>
</feature>
<feature type="strand" evidence="23">
    <location>
        <begin position="1057"/>
        <end position="1065"/>
    </location>
</feature>
<feature type="turn" evidence="21">
    <location>
        <begin position="1068"/>
        <end position="1071"/>
    </location>
</feature>
<feature type="strand" evidence="23">
    <location>
        <begin position="1072"/>
        <end position="1080"/>
    </location>
</feature>
<feature type="strand" evidence="23">
    <location>
        <begin position="1083"/>
        <end position="1090"/>
    </location>
</feature>
<feature type="strand" evidence="23">
    <location>
        <begin position="1092"/>
        <end position="1094"/>
    </location>
</feature>
<feature type="strand" evidence="20">
    <location>
        <begin position="1108"/>
        <end position="1110"/>
    </location>
</feature>
<feature type="strand" evidence="23">
    <location>
        <begin position="1111"/>
        <end position="1113"/>
    </location>
</feature>
<feature type="strand" evidence="23">
    <location>
        <begin position="1118"/>
        <end position="1123"/>
    </location>
</feature>
<feature type="strand" evidence="23">
    <location>
        <begin position="1129"/>
        <end position="1131"/>
    </location>
</feature>
<feature type="strand" evidence="23">
    <location>
        <begin position="1136"/>
        <end position="1142"/>
    </location>
</feature>
<feature type="strand" evidence="23">
    <location>
        <begin position="1145"/>
        <end position="1150"/>
    </location>
</feature>
<feature type="strand" evidence="20">
    <location>
        <begin position="1164"/>
        <end position="1168"/>
    </location>
</feature>
<feature type="strand" evidence="23">
    <location>
        <begin position="1172"/>
        <end position="1176"/>
    </location>
</feature>
<comment type="function">
    <text evidence="13">Pyruvate carboxylase catalyzes a 2-step reaction, involving the ATP-dependent carboxylation of the covalently attached biotin in the first step and the transfer of the carboxyl group to pyruvate in the second. Catalyzes in a tissue specific manner, the initial reactions of glucose (liver, kidney) and lipid (adipose tissue, liver, brain) synthesis from pyruvate.</text>
</comment>
<comment type="catalytic activity">
    <reaction evidence="13">
        <text>hydrogencarbonate + pyruvate + ATP = oxaloacetate + ADP + phosphate + H(+)</text>
        <dbReference type="Rhea" id="RHEA:20844"/>
        <dbReference type="ChEBI" id="CHEBI:15361"/>
        <dbReference type="ChEBI" id="CHEBI:15378"/>
        <dbReference type="ChEBI" id="CHEBI:16452"/>
        <dbReference type="ChEBI" id="CHEBI:17544"/>
        <dbReference type="ChEBI" id="CHEBI:30616"/>
        <dbReference type="ChEBI" id="CHEBI:43474"/>
        <dbReference type="ChEBI" id="CHEBI:456216"/>
        <dbReference type="EC" id="6.4.1.1"/>
    </reaction>
    <physiologicalReaction direction="left-to-right" evidence="13">
        <dbReference type="Rhea" id="RHEA:20845"/>
    </physiologicalReaction>
</comment>
<comment type="cofactor">
    <cofactor evidence="8">
        <name>biotin</name>
        <dbReference type="ChEBI" id="CHEBI:57586"/>
    </cofactor>
</comment>
<comment type="cofactor">
    <cofactor>
        <name>Mn(2+)</name>
        <dbReference type="ChEBI" id="CHEBI:29035"/>
    </cofactor>
    <text evidence="8">Binds 1 Mn(2+) ion per subunit.</text>
</comment>
<comment type="pathway">
    <text evidence="17">Carbohydrate biosynthesis; gluconeogenesis.</text>
</comment>
<comment type="subunit">
    <text evidence="8 10">Homotetramer (PubMed:18297087). Interacts (via the biotin carboxylation domain) with SIRT4 (PubMed:23438705).</text>
</comment>
<comment type="interaction">
    <interactant intactId="EBI-2211322">
        <id>P11498</id>
    </interactant>
    <interactant intactId="EBI-11958484">
        <id>P48163</id>
        <label>ME1</label>
    </interactant>
    <organismsDiffer>false</organismsDiffer>
    <experiments>14</experiments>
</comment>
<comment type="interaction">
    <interactant intactId="EBI-2211322">
        <id>P11498</id>
    </interactant>
    <interactant intactId="EBI-2211322">
        <id>P11498</id>
        <label>PC</label>
    </interactant>
    <organismsDiffer>false</organismsDiffer>
    <experiments>4</experiments>
</comment>
<comment type="interaction">
    <interactant intactId="EBI-2211322">
        <id>P11498</id>
    </interactant>
    <interactant intactId="EBI-8803426">
        <id>PRO_0000278740</id>
        <dbReference type="UniProtKB" id="Q03463"/>
    </interactant>
    <organismsDiffer>true</organismsDiffer>
    <experiments>7</experiments>
</comment>
<comment type="subcellular location">
    <subcellularLocation>
        <location evidence="13">Mitochondrion matrix</location>
    </subcellularLocation>
</comment>
<comment type="alternative products">
    <event type="alternative splicing"/>
    <isoform>
        <id>P11498-1</id>
        <name>1</name>
        <sequence type="displayed"/>
    </isoform>
    <isoform>
        <id>P11498-2</id>
        <name>2</name>
        <sequence type="described" ref="VSP_056358 VSP_056359"/>
    </isoform>
</comment>
<comment type="PTM">
    <text evidence="3">Acetylation of Lys-748 might play a role in catalytic activity regulation.</text>
</comment>
<comment type="disease" evidence="9 13 14">
    <disease id="DI-02237">
        <name>Pyruvate carboxylase deficiency</name>
        <acronym>PC deficiency</acronym>
        <description>Leads to lactic acidosis, intellectual disability and death. It occurs in three forms: mild or type A, severe neonatal or type B, and a very mild lacticacidemia.</description>
        <dbReference type="MIM" id="266150"/>
    </disease>
    <text>The disease is caused by variants affecting the gene represented in this entry.</text>
</comment>
<comment type="online information" name="Wikipedia">
    <link uri="https://en.wikipedia.org/wiki/Pyruvate_carboxylase"/>
    <text>Pyruvate carboxylase entry</text>
</comment>
<keyword id="KW-0002">3D-structure</keyword>
<keyword id="KW-0007">Acetylation</keyword>
<keyword id="KW-0025">Alternative splicing</keyword>
<keyword id="KW-0067">ATP-binding</keyword>
<keyword id="KW-0092">Biotin</keyword>
<keyword id="KW-0225">Disease variant</keyword>
<keyword id="KW-0312">Gluconeogenesis</keyword>
<keyword id="KW-0436">Ligase</keyword>
<keyword id="KW-0444">Lipid biosynthesis</keyword>
<keyword id="KW-0443">Lipid metabolism</keyword>
<keyword id="KW-0464">Manganese</keyword>
<keyword id="KW-0479">Metal-binding</keyword>
<keyword id="KW-0496">Mitochondrion</keyword>
<keyword id="KW-0511">Multifunctional enzyme</keyword>
<keyword id="KW-0547">Nucleotide-binding</keyword>
<keyword id="KW-0597">Phosphoprotein</keyword>
<keyword id="KW-1267">Proteomics identification</keyword>
<keyword id="KW-0670">Pyruvate</keyword>
<keyword id="KW-1185">Reference proteome</keyword>
<keyword id="KW-0809">Transit peptide</keyword>